<organism>
    <name type="scientific">Staphylococcus aureus (strain bovine RF122 / ET3-1)</name>
    <dbReference type="NCBI Taxonomy" id="273036"/>
    <lineage>
        <taxon>Bacteria</taxon>
        <taxon>Bacillati</taxon>
        <taxon>Bacillota</taxon>
        <taxon>Bacilli</taxon>
        <taxon>Bacillales</taxon>
        <taxon>Staphylococcaceae</taxon>
        <taxon>Staphylococcus</taxon>
    </lineage>
</organism>
<name>RF3_STAAB</name>
<feature type="chain" id="PRO_0000242211" description="Peptide chain release factor 3">
    <location>
        <begin position="1"/>
        <end position="520"/>
    </location>
</feature>
<feature type="domain" description="tr-type G">
    <location>
        <begin position="8"/>
        <end position="277"/>
    </location>
</feature>
<feature type="binding site" evidence="1">
    <location>
        <begin position="17"/>
        <end position="24"/>
    </location>
    <ligand>
        <name>GTP</name>
        <dbReference type="ChEBI" id="CHEBI:37565"/>
    </ligand>
</feature>
<feature type="binding site" evidence="1">
    <location>
        <begin position="85"/>
        <end position="89"/>
    </location>
    <ligand>
        <name>GTP</name>
        <dbReference type="ChEBI" id="CHEBI:37565"/>
    </ligand>
</feature>
<feature type="binding site" evidence="1">
    <location>
        <begin position="139"/>
        <end position="142"/>
    </location>
    <ligand>
        <name>GTP</name>
        <dbReference type="ChEBI" id="CHEBI:37565"/>
    </ligand>
</feature>
<gene>
    <name evidence="1" type="primary">prfC</name>
    <name type="ordered locus">SAB0886</name>
</gene>
<reference key="1">
    <citation type="journal article" date="2007" name="PLoS ONE">
        <title>Molecular correlates of host specialization in Staphylococcus aureus.</title>
        <authorList>
            <person name="Herron-Olson L."/>
            <person name="Fitzgerald J.R."/>
            <person name="Musser J.M."/>
            <person name="Kapur V."/>
        </authorList>
    </citation>
    <scope>NUCLEOTIDE SEQUENCE [LARGE SCALE GENOMIC DNA]</scope>
    <source>
        <strain>bovine RF122 / ET3-1</strain>
    </source>
</reference>
<dbReference type="EMBL" id="AJ938182">
    <property type="protein sequence ID" value="CAI80574.1"/>
    <property type="molecule type" value="Genomic_DNA"/>
</dbReference>
<dbReference type="RefSeq" id="WP_001049957.1">
    <property type="nucleotide sequence ID" value="NC_007622.1"/>
</dbReference>
<dbReference type="SMR" id="Q2YX08"/>
<dbReference type="KEGG" id="sab:SAB0886"/>
<dbReference type="HOGENOM" id="CLU_002794_2_1_9"/>
<dbReference type="GO" id="GO:0005829">
    <property type="term" value="C:cytosol"/>
    <property type="evidence" value="ECO:0007669"/>
    <property type="project" value="TreeGrafter"/>
</dbReference>
<dbReference type="GO" id="GO:0005525">
    <property type="term" value="F:GTP binding"/>
    <property type="evidence" value="ECO:0007669"/>
    <property type="project" value="UniProtKB-UniRule"/>
</dbReference>
<dbReference type="GO" id="GO:0003924">
    <property type="term" value="F:GTPase activity"/>
    <property type="evidence" value="ECO:0007669"/>
    <property type="project" value="InterPro"/>
</dbReference>
<dbReference type="GO" id="GO:0016150">
    <property type="term" value="F:translation release factor activity, codon nonspecific"/>
    <property type="evidence" value="ECO:0007669"/>
    <property type="project" value="TreeGrafter"/>
</dbReference>
<dbReference type="GO" id="GO:0016149">
    <property type="term" value="F:translation release factor activity, codon specific"/>
    <property type="evidence" value="ECO:0007669"/>
    <property type="project" value="UniProtKB-UniRule"/>
</dbReference>
<dbReference type="GO" id="GO:0006449">
    <property type="term" value="P:regulation of translational termination"/>
    <property type="evidence" value="ECO:0007669"/>
    <property type="project" value="UniProtKB-UniRule"/>
</dbReference>
<dbReference type="CDD" id="cd04169">
    <property type="entry name" value="RF3"/>
    <property type="match status" value="1"/>
</dbReference>
<dbReference type="CDD" id="cd16259">
    <property type="entry name" value="RF3_III"/>
    <property type="match status" value="1"/>
</dbReference>
<dbReference type="FunFam" id="2.40.30.10:FF:000040">
    <property type="entry name" value="Peptide chain release factor 3"/>
    <property type="match status" value="1"/>
</dbReference>
<dbReference type="FunFam" id="3.30.70.3280:FF:000001">
    <property type="entry name" value="Peptide chain release factor 3"/>
    <property type="match status" value="1"/>
</dbReference>
<dbReference type="FunFam" id="3.40.50.300:FF:000542">
    <property type="entry name" value="Peptide chain release factor 3"/>
    <property type="match status" value="1"/>
</dbReference>
<dbReference type="Gene3D" id="3.40.50.300">
    <property type="entry name" value="P-loop containing nucleotide triphosphate hydrolases"/>
    <property type="match status" value="1"/>
</dbReference>
<dbReference type="Gene3D" id="3.30.70.3280">
    <property type="entry name" value="Peptide chain release factor 3, domain III"/>
    <property type="match status" value="1"/>
</dbReference>
<dbReference type="Gene3D" id="2.40.30.10">
    <property type="entry name" value="Translation factors"/>
    <property type="match status" value="1"/>
</dbReference>
<dbReference type="HAMAP" id="MF_00072">
    <property type="entry name" value="Rel_fac_3"/>
    <property type="match status" value="1"/>
</dbReference>
<dbReference type="InterPro" id="IPR053905">
    <property type="entry name" value="EF-G-like_DII"/>
</dbReference>
<dbReference type="InterPro" id="IPR035647">
    <property type="entry name" value="EFG_III/V"/>
</dbReference>
<dbReference type="InterPro" id="IPR031157">
    <property type="entry name" value="G_TR_CS"/>
</dbReference>
<dbReference type="InterPro" id="IPR027417">
    <property type="entry name" value="P-loop_NTPase"/>
</dbReference>
<dbReference type="InterPro" id="IPR004548">
    <property type="entry name" value="PrfC"/>
</dbReference>
<dbReference type="InterPro" id="IPR032090">
    <property type="entry name" value="RF3_C"/>
</dbReference>
<dbReference type="InterPro" id="IPR038467">
    <property type="entry name" value="RF3_dom_3_sf"/>
</dbReference>
<dbReference type="InterPro" id="IPR041732">
    <property type="entry name" value="RF3_GTP-bd"/>
</dbReference>
<dbReference type="InterPro" id="IPR005225">
    <property type="entry name" value="Small_GTP-bd"/>
</dbReference>
<dbReference type="InterPro" id="IPR000795">
    <property type="entry name" value="T_Tr_GTP-bd_dom"/>
</dbReference>
<dbReference type="InterPro" id="IPR009000">
    <property type="entry name" value="Transl_B-barrel_sf"/>
</dbReference>
<dbReference type="NCBIfam" id="TIGR00503">
    <property type="entry name" value="prfC"/>
    <property type="match status" value="1"/>
</dbReference>
<dbReference type="NCBIfam" id="NF001964">
    <property type="entry name" value="PRK00741.1"/>
    <property type="match status" value="1"/>
</dbReference>
<dbReference type="NCBIfam" id="TIGR00231">
    <property type="entry name" value="small_GTP"/>
    <property type="match status" value="1"/>
</dbReference>
<dbReference type="PANTHER" id="PTHR43556">
    <property type="entry name" value="PEPTIDE CHAIN RELEASE FACTOR RF3"/>
    <property type="match status" value="1"/>
</dbReference>
<dbReference type="PANTHER" id="PTHR43556:SF2">
    <property type="entry name" value="PEPTIDE CHAIN RELEASE FACTOR RF3"/>
    <property type="match status" value="1"/>
</dbReference>
<dbReference type="Pfam" id="PF22042">
    <property type="entry name" value="EF-G_D2"/>
    <property type="match status" value="1"/>
</dbReference>
<dbReference type="Pfam" id="PF00009">
    <property type="entry name" value="GTP_EFTU"/>
    <property type="match status" value="1"/>
</dbReference>
<dbReference type="Pfam" id="PF16658">
    <property type="entry name" value="RF3_C"/>
    <property type="match status" value="1"/>
</dbReference>
<dbReference type="PRINTS" id="PR00315">
    <property type="entry name" value="ELONGATNFCT"/>
</dbReference>
<dbReference type="SUPFAM" id="SSF54980">
    <property type="entry name" value="EF-G C-terminal domain-like"/>
    <property type="match status" value="1"/>
</dbReference>
<dbReference type="SUPFAM" id="SSF52540">
    <property type="entry name" value="P-loop containing nucleoside triphosphate hydrolases"/>
    <property type="match status" value="1"/>
</dbReference>
<dbReference type="SUPFAM" id="SSF50447">
    <property type="entry name" value="Translation proteins"/>
    <property type="match status" value="1"/>
</dbReference>
<dbReference type="PROSITE" id="PS00301">
    <property type="entry name" value="G_TR_1"/>
    <property type="match status" value="1"/>
</dbReference>
<dbReference type="PROSITE" id="PS51722">
    <property type="entry name" value="G_TR_2"/>
    <property type="match status" value="1"/>
</dbReference>
<accession>Q2YX08</accession>
<evidence type="ECO:0000255" key="1">
    <source>
        <dbReference type="HAMAP-Rule" id="MF_00072"/>
    </source>
</evidence>
<proteinExistence type="inferred from homology"/>
<sequence length="520" mass="59572">MNLKQEVESRKTFAIISHPDAGKTTLTEKLLYFSGAIREAGTVKGKKTGKFATSDWMKVEQERGISVTSSVMQFDYDDYKINILDTPGHEDFSEDTYRTLMAVDSAVMVIDCAKGIEPQTLKLFKVCKMRGIPIFTFINKLDRVGKEPFELLDEIEETLNIETYPMNWPIGMGQSFFGIIDRKSKTIEPFRDEENILHLNDDFELEEDHAITNDSAFEQAIEELMLVEEAGEAFDNDALLSGDLTPVFFGSALANFGVQNFLNAYVDFAPMPNARQTKEEVEVSPFDDSFSGFIFKIQANMDPKHRDRIAFMRVVSGAFERGMDVTLQRTNKKQKITRSTSFMADDKETVNHAVAGDIIGLYDTGNYQIGDTLVGGKQTYSFQDLPQFTPEIFMKVSAKNVMKQKHFHKGIEQLVQEGAIQYYKTLHTNQIILGAVGQLQFEVFEHRMKNEYNVDVVMEPVGRKIARWIENEDQITDKMNTSRSILVKDRYDDLVFLFENEFATRWFEEKFPEIKLYSLL</sequence>
<protein>
    <recommendedName>
        <fullName evidence="1">Peptide chain release factor 3</fullName>
        <shortName evidence="1">RF-3</shortName>
    </recommendedName>
</protein>
<keyword id="KW-0963">Cytoplasm</keyword>
<keyword id="KW-0342">GTP-binding</keyword>
<keyword id="KW-0547">Nucleotide-binding</keyword>
<keyword id="KW-0648">Protein biosynthesis</keyword>
<comment type="function">
    <text evidence="1">Increases the formation of ribosomal termination complexes and stimulates activities of RF-1 and RF-2. It binds guanine nucleotides and has strong preference for UGA stop codons. It may interact directly with the ribosome. The stimulation of RF-1 and RF-2 is significantly reduced by GTP and GDP, but not by GMP.</text>
</comment>
<comment type="subcellular location">
    <subcellularLocation>
        <location evidence="1">Cytoplasm</location>
    </subcellularLocation>
</comment>
<comment type="similarity">
    <text evidence="1">Belongs to the TRAFAC class translation factor GTPase superfamily. Classic translation factor GTPase family. PrfC subfamily.</text>
</comment>